<sequence length="349" mass="37738">MNIKKTAVKSALAVAAAAAALTTNVSAKDFSGAELYTLEEVQYGKFEARMKMAAASGTVSSMFLYQNGSEIADGRPWVEVDIEVLGKNPGSFQSNIITGKAGAQKTSEKHHAVSPAADQAFHTYGLEWTPNYVRWTVDGQEVRKTEGGQVSNLTGTQGLRFNLWSSESAAWVGQFDESKLPLFQFINWVKVYKYTPGQGEGGSDFTLDWTDNFDTFDGSRWGKGDWTFDGNRVDLTDKNIYSRDGMLILALTRKGQESFNGQVPRDDEPAPQSSSSAPASSSSVPASSSSVPASSSSAFVPPSSSSATNAIHGMRTTPAVAKEHRNLVNAKGAKVNPNGHKRYRVNFEH</sequence>
<accession>P17989</accession>
<accession>C9RPK9</accession>
<accession>D9S550</accession>
<proteinExistence type="evidence at protein level"/>
<reference key="1">
    <citation type="journal article" date="1990" name="J. Bacteriol.">
        <title>DNA sequence of a Fibrobacter succinogenes mixed-linkage beta-glucanase (1,3-1,4-beta-D-glucan 4-glucanohydrolase) gene.</title>
        <authorList>
            <person name="Teather R.M."/>
            <person name="Erfle J.D."/>
        </authorList>
    </citation>
    <scope>NUCLEOTIDE SEQUENCE [GENOMIC DNA]</scope>
    <scope>PROTEIN SEQUENCE OF 28-57</scope>
</reference>
<reference key="2">
    <citation type="submission" date="2009-10" db="EMBL/GenBank/DDBJ databases">
        <title>Complete sequence of Fibrobacter succinogenes subsp. succinogenes S85.</title>
        <authorList>
            <consortium name="US DOE Joint Genome Institute"/>
            <person name="Lucas S."/>
            <person name="Copeland A."/>
            <person name="Lapidus A."/>
            <person name="Glavina del Rio T."/>
            <person name="Tice H."/>
            <person name="Bruce D."/>
            <person name="Goodwin L."/>
            <person name="Pitluck S."/>
            <person name="Chertkov O."/>
            <person name="Detter J.C."/>
            <person name="Han C."/>
            <person name="Tapia R."/>
            <person name="Larimer F."/>
            <person name="Land M."/>
            <person name="Hauser L."/>
            <person name="Kyrpides N."/>
            <person name="Mikhailova N."/>
            <person name="Weimer P.J."/>
            <person name="Stevenson D.M."/>
            <person name="Boyum J."/>
            <person name="Brumm P.I."/>
            <person name="Mead D."/>
        </authorList>
    </citation>
    <scope>NUCLEOTIDE SEQUENCE [LARGE SCALE GENOMIC DNA]</scope>
    <source>
        <strain>ATCC 19169 / S85</strain>
    </source>
</reference>
<reference key="3">
    <citation type="submission" date="2010-08" db="EMBL/GenBank/DDBJ databases">
        <title>Complete sequence of Fibrobacter succinogenes subsp. succinogenes S85.</title>
        <authorList>
            <person name="Durkin A.S."/>
            <person name="Nelson K.E."/>
            <person name="Morrison M."/>
            <person name="Forsberg C.W."/>
            <person name="Wilson D.B."/>
            <person name="Russell J.B."/>
            <person name="Cann I.K.O."/>
            <person name="Mackie R.I."/>
            <person name="White B.A."/>
        </authorList>
    </citation>
    <scope>NUCLEOTIDE SEQUENCE [LARGE SCALE GENOMIC DNA]</scope>
    <source>
        <strain>ATCC 19169 / S85</strain>
    </source>
</reference>
<evidence type="ECO:0000255" key="1">
    <source>
        <dbReference type="PROSITE-ProRule" id="PRU01098"/>
    </source>
</evidence>
<evidence type="ECO:0000255" key="2">
    <source>
        <dbReference type="PROSITE-ProRule" id="PRU10064"/>
    </source>
</evidence>
<evidence type="ECO:0000256" key="3">
    <source>
        <dbReference type="SAM" id="MobiDB-lite"/>
    </source>
</evidence>
<evidence type="ECO:0000269" key="4">
    <source>
    </source>
</evidence>
<evidence type="ECO:0000305" key="5"/>
<evidence type="ECO:0007829" key="6">
    <source>
        <dbReference type="PDB" id="2R49"/>
    </source>
</evidence>
<evidence type="ECO:0007829" key="7">
    <source>
        <dbReference type="PDB" id="3H0O"/>
    </source>
</evidence>
<feature type="signal peptide" evidence="4">
    <location>
        <begin position="1"/>
        <end position="27"/>
    </location>
</feature>
<feature type="chain" id="PRO_0000011793" description="Beta-glucanase">
    <location>
        <begin position="28"/>
        <end position="349"/>
    </location>
</feature>
<feature type="domain" description="GH16" evidence="1">
    <location>
        <begin position="28"/>
        <end position="197"/>
    </location>
</feature>
<feature type="repeat" description="1">
    <location>
        <begin position="271"/>
        <end position="277"/>
    </location>
</feature>
<feature type="repeat" description="2">
    <location>
        <begin position="278"/>
        <end position="284"/>
    </location>
</feature>
<feature type="repeat" description="3">
    <location>
        <begin position="285"/>
        <end position="291"/>
    </location>
</feature>
<feature type="repeat" description="4">
    <location>
        <begin position="292"/>
        <end position="298"/>
    </location>
</feature>
<feature type="repeat" description="5">
    <location>
        <begin position="301"/>
        <end position="307"/>
    </location>
</feature>
<feature type="region of interest" description="Disordered" evidence="3">
    <location>
        <begin position="258"/>
        <end position="311"/>
    </location>
</feature>
<feature type="region of interest" description="5 X 7 AA tandem repeats of P-X-S-S-S-S-X">
    <location>
        <begin position="271"/>
        <end position="307"/>
    </location>
</feature>
<feature type="compositionally biased region" description="Low complexity" evidence="3">
    <location>
        <begin position="270"/>
        <end position="307"/>
    </location>
</feature>
<feature type="active site" description="Nucleophile" evidence="2">
    <location>
        <position position="79"/>
    </location>
</feature>
<feature type="active site" description="Proton donor" evidence="2">
    <location>
        <position position="83"/>
    </location>
</feature>
<feature type="strand" evidence="7">
    <location>
        <begin position="29"/>
        <end position="39"/>
    </location>
</feature>
<feature type="strand" evidence="7">
    <location>
        <begin position="41"/>
        <end position="51"/>
    </location>
</feature>
<feature type="strand" evidence="7">
    <location>
        <begin position="58"/>
        <end position="65"/>
    </location>
</feature>
<feature type="turn" evidence="7">
    <location>
        <begin position="67"/>
        <end position="70"/>
    </location>
</feature>
<feature type="strand" evidence="6">
    <location>
        <begin position="72"/>
        <end position="74"/>
    </location>
</feature>
<feature type="strand" evidence="7">
    <location>
        <begin position="79"/>
        <end position="85"/>
    </location>
</feature>
<feature type="strand" evidence="7">
    <location>
        <begin position="91"/>
        <end position="100"/>
    </location>
</feature>
<feature type="strand" evidence="7">
    <location>
        <begin position="103"/>
        <end position="105"/>
    </location>
</feature>
<feature type="strand" evidence="7">
    <location>
        <begin position="109"/>
        <end position="112"/>
    </location>
</feature>
<feature type="turn" evidence="7">
    <location>
        <begin position="117"/>
        <end position="119"/>
    </location>
</feature>
<feature type="strand" evidence="7">
    <location>
        <begin position="122"/>
        <end position="128"/>
    </location>
</feature>
<feature type="strand" evidence="7">
    <location>
        <begin position="133"/>
        <end position="137"/>
    </location>
</feature>
<feature type="strand" evidence="7">
    <location>
        <begin position="140"/>
        <end position="145"/>
    </location>
</feature>
<feature type="helix" evidence="7">
    <location>
        <begin position="148"/>
        <end position="151"/>
    </location>
</feature>
<feature type="strand" evidence="7">
    <location>
        <begin position="157"/>
        <end position="167"/>
    </location>
</feature>
<feature type="helix" evidence="7">
    <location>
        <begin position="169"/>
        <end position="172"/>
    </location>
</feature>
<feature type="helix" evidence="7">
    <location>
        <begin position="177"/>
        <end position="179"/>
    </location>
</feature>
<feature type="strand" evidence="7">
    <location>
        <begin position="182"/>
        <end position="194"/>
    </location>
</feature>
<feature type="turn" evidence="7">
    <location>
        <begin position="196"/>
        <end position="198"/>
    </location>
</feature>
<feature type="helix" evidence="7">
    <location>
        <begin position="200"/>
        <end position="202"/>
    </location>
</feature>
<feature type="strand" evidence="7">
    <location>
        <begin position="204"/>
        <end position="211"/>
    </location>
</feature>
<feature type="turn" evidence="7">
    <location>
        <begin position="218"/>
        <end position="220"/>
    </location>
</feature>
<feature type="strand" evidence="7">
    <location>
        <begin position="221"/>
        <end position="223"/>
    </location>
</feature>
<feature type="strand" evidence="7">
    <location>
        <begin position="233"/>
        <end position="235"/>
    </location>
</feature>
<feature type="helix" evidence="7">
    <location>
        <begin position="237"/>
        <end position="239"/>
    </location>
</feature>
<feature type="strand" evidence="7">
    <location>
        <begin position="240"/>
        <end position="243"/>
    </location>
</feature>
<feature type="strand" evidence="7">
    <location>
        <begin position="246"/>
        <end position="253"/>
    </location>
</feature>
<dbReference type="EC" id="3.2.1.73"/>
<dbReference type="EMBL" id="M33676">
    <property type="protein sequence ID" value="AAA24896.1"/>
    <property type="molecule type" value="Genomic_DNA"/>
</dbReference>
<dbReference type="EMBL" id="CP001792">
    <property type="protein sequence ID" value="ACX76541.1"/>
    <property type="molecule type" value="Genomic_DNA"/>
</dbReference>
<dbReference type="EMBL" id="CP002158">
    <property type="protein sequence ID" value="ADL24776.1"/>
    <property type="molecule type" value="Genomic_DNA"/>
</dbReference>
<dbReference type="PIR" id="A44507">
    <property type="entry name" value="A44507"/>
</dbReference>
<dbReference type="RefSeq" id="WP_014545066.1">
    <property type="nucleotide sequence ID" value="NC_013410.1"/>
</dbReference>
<dbReference type="PDB" id="1MVE">
    <property type="method" value="X-ray"/>
    <property type="resolution" value="1.70 A"/>
    <property type="chains" value="A=25-266"/>
</dbReference>
<dbReference type="PDB" id="1ZM1">
    <property type="method" value="X-ray"/>
    <property type="resolution" value="2.30 A"/>
    <property type="chains" value="A/B=27-267"/>
</dbReference>
<dbReference type="PDB" id="2R49">
    <property type="method" value="X-ray"/>
    <property type="resolution" value="2.20 A"/>
    <property type="chains" value="A=26-266"/>
</dbReference>
<dbReference type="PDB" id="3AXD">
    <property type="method" value="X-ray"/>
    <property type="resolution" value="1.53 A"/>
    <property type="chains" value="A/B=25-271"/>
</dbReference>
<dbReference type="PDB" id="3AXE">
    <property type="method" value="X-ray"/>
    <property type="resolution" value="1.53 A"/>
    <property type="chains" value="A=25-271"/>
</dbReference>
<dbReference type="PDB" id="3H0O">
    <property type="method" value="X-ray"/>
    <property type="resolution" value="1.40 A"/>
    <property type="chains" value="A=27-266"/>
</dbReference>
<dbReference type="PDB" id="3HR9">
    <property type="method" value="X-ray"/>
    <property type="resolution" value="1.70 A"/>
    <property type="chains" value="A=26-266"/>
</dbReference>
<dbReference type="PDBsum" id="1MVE"/>
<dbReference type="PDBsum" id="1ZM1"/>
<dbReference type="PDBsum" id="2R49"/>
<dbReference type="PDBsum" id="3AXD"/>
<dbReference type="PDBsum" id="3AXE"/>
<dbReference type="PDBsum" id="3H0O"/>
<dbReference type="PDBsum" id="3HR9"/>
<dbReference type="SMR" id="P17989"/>
<dbReference type="STRING" id="59374.FSU_0226"/>
<dbReference type="CAZy" id="GH16">
    <property type="family name" value="Glycoside Hydrolase Family 16"/>
</dbReference>
<dbReference type="KEGG" id="fsc:FSU_0226"/>
<dbReference type="KEGG" id="fsu:Fisuc_2961"/>
<dbReference type="eggNOG" id="COG2273">
    <property type="taxonomic scope" value="Bacteria"/>
</dbReference>
<dbReference type="HOGENOM" id="CLU_063230_0_0_0"/>
<dbReference type="OrthoDB" id="9809583at2"/>
<dbReference type="BRENDA" id="3.2.1.73">
    <property type="organism ID" value="771"/>
</dbReference>
<dbReference type="EvolutionaryTrace" id="P17989"/>
<dbReference type="Proteomes" id="UP000000517">
    <property type="component" value="Chromosome"/>
</dbReference>
<dbReference type="GO" id="GO:0042972">
    <property type="term" value="F:licheninase activity"/>
    <property type="evidence" value="ECO:0007669"/>
    <property type="project" value="UniProtKB-EC"/>
</dbReference>
<dbReference type="GO" id="GO:0005975">
    <property type="term" value="P:carbohydrate metabolic process"/>
    <property type="evidence" value="ECO:0007669"/>
    <property type="project" value="InterPro"/>
</dbReference>
<dbReference type="Gene3D" id="2.60.120.200">
    <property type="match status" value="1"/>
</dbReference>
<dbReference type="InterPro" id="IPR008264">
    <property type="entry name" value="Beta_glucanase"/>
</dbReference>
<dbReference type="InterPro" id="IPR013320">
    <property type="entry name" value="ConA-like_dom_sf"/>
</dbReference>
<dbReference type="InterPro" id="IPR000757">
    <property type="entry name" value="GH16"/>
</dbReference>
<dbReference type="InterPro" id="IPR008263">
    <property type="entry name" value="GH16_AS"/>
</dbReference>
<dbReference type="InterPro" id="IPR050546">
    <property type="entry name" value="Glycosyl_Hydrlase_16"/>
</dbReference>
<dbReference type="PANTHER" id="PTHR10963:SF22">
    <property type="entry name" value="GLYCOSIDASE CRH2-RELATED"/>
    <property type="match status" value="1"/>
</dbReference>
<dbReference type="PANTHER" id="PTHR10963">
    <property type="entry name" value="GLYCOSYL HYDROLASE-RELATED"/>
    <property type="match status" value="1"/>
</dbReference>
<dbReference type="Pfam" id="PF00722">
    <property type="entry name" value="Glyco_hydro_16"/>
    <property type="match status" value="1"/>
</dbReference>
<dbReference type="PRINTS" id="PR00737">
    <property type="entry name" value="GLHYDRLASE16"/>
</dbReference>
<dbReference type="SUPFAM" id="SSF49899">
    <property type="entry name" value="Concanavalin A-like lectins/glucanases"/>
    <property type="match status" value="1"/>
</dbReference>
<dbReference type="PROSITE" id="PS01034">
    <property type="entry name" value="GH16_1"/>
    <property type="match status" value="1"/>
</dbReference>
<dbReference type="PROSITE" id="PS51762">
    <property type="entry name" value="GH16_2"/>
    <property type="match status" value="1"/>
</dbReference>
<comment type="catalytic activity">
    <reaction>
        <text>Hydrolysis of (1-&gt;4)-beta-D-glucosidic linkages in beta-D-glucans containing (1-&gt;3)- and (1-&gt;4)-bonds.</text>
        <dbReference type="EC" id="3.2.1.73"/>
    </reaction>
</comment>
<comment type="similarity">
    <text evidence="5">Belongs to the glycosyl hydrolase 16 family.</text>
</comment>
<keyword id="KW-0002">3D-structure</keyword>
<keyword id="KW-0903">Direct protein sequencing</keyword>
<keyword id="KW-0326">Glycosidase</keyword>
<keyword id="KW-0378">Hydrolase</keyword>
<keyword id="KW-0677">Repeat</keyword>
<keyword id="KW-0732">Signal</keyword>
<protein>
    <recommendedName>
        <fullName>Beta-glucanase</fullName>
        <ecNumber>3.2.1.73</ecNumber>
    </recommendedName>
    <alternativeName>
        <fullName>1,3-1,4-beta-D-glucan 4-glucanohydrolase</fullName>
    </alternativeName>
    <alternativeName>
        <fullName>Endo-beta-1,3-1,4 glucanase</fullName>
    </alternativeName>
    <alternativeName>
        <fullName>Lichenase</fullName>
    </alternativeName>
    <alternativeName>
        <fullName>Mixed linkage beta-glucanase</fullName>
    </alternativeName>
</protein>
<gene>
    <name type="ordered locus">Fisuc_2961</name>
    <name type="ordered locus">FSU_0226</name>
</gene>
<organism>
    <name type="scientific">Fibrobacter succinogenes (strain ATCC 19169 / S85)</name>
    <dbReference type="NCBI Taxonomy" id="59374"/>
    <lineage>
        <taxon>Bacteria</taxon>
        <taxon>Pseudomonadati</taxon>
        <taxon>Fibrobacterota</taxon>
        <taxon>Fibrobacteria</taxon>
        <taxon>Fibrobacterales</taxon>
        <taxon>Fibrobacteraceae</taxon>
        <taxon>Fibrobacter</taxon>
    </lineage>
</organism>
<name>GUB_FIBSS</name>